<organism>
    <name type="scientific">Arabidopsis thaliana</name>
    <name type="common">Mouse-ear cress</name>
    <dbReference type="NCBI Taxonomy" id="3702"/>
    <lineage>
        <taxon>Eukaryota</taxon>
        <taxon>Viridiplantae</taxon>
        <taxon>Streptophyta</taxon>
        <taxon>Embryophyta</taxon>
        <taxon>Tracheophyta</taxon>
        <taxon>Spermatophyta</taxon>
        <taxon>Magnoliopsida</taxon>
        <taxon>eudicotyledons</taxon>
        <taxon>Gunneridae</taxon>
        <taxon>Pentapetalae</taxon>
        <taxon>rosids</taxon>
        <taxon>malvids</taxon>
        <taxon>Brassicales</taxon>
        <taxon>Brassicaceae</taxon>
        <taxon>Camelineae</taxon>
        <taxon>Arabidopsis</taxon>
    </lineage>
</organism>
<feature type="chain" id="PRO_0000326474" description="Probable transposase-like protein At4g04430">
    <location>
        <begin position="1"/>
        <end position="350"/>
    </location>
</feature>
<feature type="region of interest" description="Disordered" evidence="1">
    <location>
        <begin position="1"/>
        <end position="57"/>
    </location>
</feature>
<feature type="region of interest" description="Disordered" evidence="1">
    <location>
        <begin position="307"/>
        <end position="328"/>
    </location>
</feature>
<feature type="compositionally biased region" description="Low complexity" evidence="1">
    <location>
        <begin position="30"/>
        <end position="43"/>
    </location>
</feature>
<proteinExistence type="inferred from homology"/>
<name>Y4443_ARATH</name>
<comment type="similarity">
    <text evidence="2">Belongs to the transposase 24 family.</text>
</comment>
<keyword id="KW-1185">Reference proteome</keyword>
<sequence length="350" mass="38956">MPSDNTFVRVRQQQRDPLHVNSPVSGGNISGVQGSGSRSGSTVPPSPPTPTTQPSVNHYDVQVDRLNNLTLEELLDSPDIKGYNRSMQVYNWDRSINKRVRVEFEAKLKSRMSNQVSRWKGNWKEKGDEAKPKWIDPDVWKGLVQFWQDPKSEKKSNNSRNARYHDLDGKDIYKHRSGQTSYKARARKRCEKTGETTPDFLELLDETHRKADGTFIDGKSKEIYKQVTSRIEEEESHMCSMDNPESTGSGGLSVHSKNKIFTEKLAAAEACIQSQAERINSFDILFDYLAEKDPALAAILRHGSSTQIGQANPNEPPVSAAPEPQVANEETAAAALANLATGSSPPSTVF</sequence>
<gene>
    <name type="ordered locus">At4g04430</name>
    <name type="ORF">T26N6.4</name>
</gene>
<reference key="1">
    <citation type="journal article" date="1999" name="Nature">
        <title>Sequence and analysis of chromosome 4 of the plant Arabidopsis thaliana.</title>
        <authorList>
            <person name="Mayer K.F.X."/>
            <person name="Schueller C."/>
            <person name="Wambutt R."/>
            <person name="Murphy G."/>
            <person name="Volckaert G."/>
            <person name="Pohl T."/>
            <person name="Duesterhoeft A."/>
            <person name="Stiekema W."/>
            <person name="Entian K.-D."/>
            <person name="Terryn N."/>
            <person name="Harris B."/>
            <person name="Ansorge W."/>
            <person name="Brandt P."/>
            <person name="Grivell L.A."/>
            <person name="Rieger M."/>
            <person name="Weichselgartner M."/>
            <person name="de Simone V."/>
            <person name="Obermaier B."/>
            <person name="Mache R."/>
            <person name="Mueller M."/>
            <person name="Kreis M."/>
            <person name="Delseny M."/>
            <person name="Puigdomenech P."/>
            <person name="Watson M."/>
            <person name="Schmidtheini T."/>
            <person name="Reichert B."/>
            <person name="Portetelle D."/>
            <person name="Perez-Alonso M."/>
            <person name="Boutry M."/>
            <person name="Bancroft I."/>
            <person name="Vos P."/>
            <person name="Hoheisel J."/>
            <person name="Zimmermann W."/>
            <person name="Wedler H."/>
            <person name="Ridley P."/>
            <person name="Langham S.-A."/>
            <person name="McCullagh B."/>
            <person name="Bilham L."/>
            <person name="Robben J."/>
            <person name="van der Schueren J."/>
            <person name="Grymonprez B."/>
            <person name="Chuang Y.-J."/>
            <person name="Vandenbussche F."/>
            <person name="Braeken M."/>
            <person name="Weltjens I."/>
            <person name="Voet M."/>
            <person name="Bastiaens I."/>
            <person name="Aert R."/>
            <person name="Defoor E."/>
            <person name="Weitzenegger T."/>
            <person name="Bothe G."/>
            <person name="Ramsperger U."/>
            <person name="Hilbert H."/>
            <person name="Braun M."/>
            <person name="Holzer E."/>
            <person name="Brandt A."/>
            <person name="Peters S."/>
            <person name="van Staveren M."/>
            <person name="Dirkse W."/>
            <person name="Mooijman P."/>
            <person name="Klein Lankhorst R."/>
            <person name="Rose M."/>
            <person name="Hauf J."/>
            <person name="Koetter P."/>
            <person name="Berneiser S."/>
            <person name="Hempel S."/>
            <person name="Feldpausch M."/>
            <person name="Lamberth S."/>
            <person name="Van den Daele H."/>
            <person name="De Keyser A."/>
            <person name="Buysshaert C."/>
            <person name="Gielen J."/>
            <person name="Villarroel R."/>
            <person name="De Clercq R."/>
            <person name="van Montagu M."/>
            <person name="Rogers J."/>
            <person name="Cronin A."/>
            <person name="Quail M.A."/>
            <person name="Bray-Allen S."/>
            <person name="Clark L."/>
            <person name="Doggett J."/>
            <person name="Hall S."/>
            <person name="Kay M."/>
            <person name="Lennard N."/>
            <person name="McLay K."/>
            <person name="Mayes R."/>
            <person name="Pettett A."/>
            <person name="Rajandream M.A."/>
            <person name="Lyne M."/>
            <person name="Benes V."/>
            <person name="Rechmann S."/>
            <person name="Borkova D."/>
            <person name="Bloecker H."/>
            <person name="Scharfe M."/>
            <person name="Grimm M."/>
            <person name="Loehnert T.-H."/>
            <person name="Dose S."/>
            <person name="de Haan M."/>
            <person name="Maarse A.C."/>
            <person name="Schaefer M."/>
            <person name="Mueller-Auer S."/>
            <person name="Gabel C."/>
            <person name="Fuchs M."/>
            <person name="Fartmann B."/>
            <person name="Granderath K."/>
            <person name="Dauner D."/>
            <person name="Herzl A."/>
            <person name="Neumann S."/>
            <person name="Argiriou A."/>
            <person name="Vitale D."/>
            <person name="Liguori R."/>
            <person name="Piravandi E."/>
            <person name="Massenet O."/>
            <person name="Quigley F."/>
            <person name="Clabauld G."/>
            <person name="Muendlein A."/>
            <person name="Felber R."/>
            <person name="Schnabl S."/>
            <person name="Hiller R."/>
            <person name="Schmidt W."/>
            <person name="Lecharny A."/>
            <person name="Aubourg S."/>
            <person name="Chefdor F."/>
            <person name="Cooke R."/>
            <person name="Berger C."/>
            <person name="Monfort A."/>
            <person name="Casacuberta E."/>
            <person name="Gibbons T."/>
            <person name="Weber N."/>
            <person name="Vandenbol M."/>
            <person name="Bargues M."/>
            <person name="Terol J."/>
            <person name="Torres A."/>
            <person name="Perez-Perez A."/>
            <person name="Purnelle B."/>
            <person name="Bent E."/>
            <person name="Johnson S."/>
            <person name="Tacon D."/>
            <person name="Jesse T."/>
            <person name="Heijnen L."/>
            <person name="Schwarz S."/>
            <person name="Scholler P."/>
            <person name="Heber S."/>
            <person name="Francs P."/>
            <person name="Bielke C."/>
            <person name="Frishman D."/>
            <person name="Haase D."/>
            <person name="Lemcke K."/>
            <person name="Mewes H.-W."/>
            <person name="Stocker S."/>
            <person name="Zaccaria P."/>
            <person name="Bevan M."/>
            <person name="Wilson R.K."/>
            <person name="de la Bastide M."/>
            <person name="Habermann K."/>
            <person name="Parnell L."/>
            <person name="Dedhia N."/>
            <person name="Gnoj L."/>
            <person name="Schutz K."/>
            <person name="Huang E."/>
            <person name="Spiegel L."/>
            <person name="Sekhon M."/>
            <person name="Murray J."/>
            <person name="Sheet P."/>
            <person name="Cordes M."/>
            <person name="Abu-Threideh J."/>
            <person name="Stoneking T."/>
            <person name="Kalicki J."/>
            <person name="Graves T."/>
            <person name="Harmon G."/>
            <person name="Edwards J."/>
            <person name="Latreille P."/>
            <person name="Courtney L."/>
            <person name="Cloud J."/>
            <person name="Abbott A."/>
            <person name="Scott K."/>
            <person name="Johnson D."/>
            <person name="Minx P."/>
            <person name="Bentley D."/>
            <person name="Fulton B."/>
            <person name="Miller N."/>
            <person name="Greco T."/>
            <person name="Kemp K."/>
            <person name="Kramer J."/>
            <person name="Fulton L."/>
            <person name="Mardis E."/>
            <person name="Dante M."/>
            <person name="Pepin K."/>
            <person name="Hillier L.W."/>
            <person name="Nelson J."/>
            <person name="Spieth J."/>
            <person name="Ryan E."/>
            <person name="Andrews S."/>
            <person name="Geisel C."/>
            <person name="Layman D."/>
            <person name="Du H."/>
            <person name="Ali J."/>
            <person name="Berghoff A."/>
            <person name="Jones K."/>
            <person name="Drone K."/>
            <person name="Cotton M."/>
            <person name="Joshu C."/>
            <person name="Antonoiu B."/>
            <person name="Zidanic M."/>
            <person name="Strong C."/>
            <person name="Sun H."/>
            <person name="Lamar B."/>
            <person name="Yordan C."/>
            <person name="Ma P."/>
            <person name="Zhong J."/>
            <person name="Preston R."/>
            <person name="Vil D."/>
            <person name="Shekher M."/>
            <person name="Matero A."/>
            <person name="Shah R."/>
            <person name="Swaby I.K."/>
            <person name="O'Shaughnessy A."/>
            <person name="Rodriguez M."/>
            <person name="Hoffman J."/>
            <person name="Till S."/>
            <person name="Granat S."/>
            <person name="Shohdy N."/>
            <person name="Hasegawa A."/>
            <person name="Hameed A."/>
            <person name="Lodhi M."/>
            <person name="Johnson A."/>
            <person name="Chen E."/>
            <person name="Marra M.A."/>
            <person name="Martienssen R."/>
            <person name="McCombie W.R."/>
        </authorList>
    </citation>
    <scope>NUCLEOTIDE SEQUENCE [LARGE SCALE GENOMIC DNA]</scope>
    <source>
        <strain>cv. Columbia</strain>
    </source>
</reference>
<reference key="2">
    <citation type="journal article" date="2017" name="Plant J.">
        <title>Araport11: a complete reannotation of the Arabidopsis thaliana reference genome.</title>
        <authorList>
            <person name="Cheng C.Y."/>
            <person name="Krishnakumar V."/>
            <person name="Chan A.P."/>
            <person name="Thibaud-Nissen F."/>
            <person name="Schobel S."/>
            <person name="Town C.D."/>
        </authorList>
    </citation>
    <scope>GENOME REANNOTATION</scope>
    <source>
        <strain>cv. Columbia</strain>
    </source>
</reference>
<protein>
    <recommendedName>
        <fullName>Probable transposase-like protein At4g04430</fullName>
    </recommendedName>
</protein>
<evidence type="ECO:0000256" key="1">
    <source>
        <dbReference type="SAM" id="MobiDB-lite"/>
    </source>
</evidence>
<evidence type="ECO:0000305" key="2"/>
<dbReference type="EMBL" id="AF076243">
    <property type="protein sequence ID" value="AAD29755.1"/>
    <property type="molecule type" value="Genomic_DNA"/>
</dbReference>
<dbReference type="EMBL" id="AL161500">
    <property type="protein sequence ID" value="CAB77911.1"/>
    <property type="molecule type" value="Genomic_DNA"/>
</dbReference>
<dbReference type="EMBL" id="CP002687">
    <property type="status" value="NOT_ANNOTATED_CDS"/>
    <property type="molecule type" value="Genomic_DNA"/>
</dbReference>
<dbReference type="PIR" id="A85056">
    <property type="entry name" value="A85056"/>
</dbReference>
<dbReference type="SMR" id="Q9XEC1"/>
<dbReference type="STRING" id="3702.Q9XEC1"/>
<dbReference type="GlyGen" id="Q9XEC1">
    <property type="glycosylation" value="1 site"/>
</dbReference>
<dbReference type="PeptideAtlas" id="Q9XEC1"/>
<dbReference type="Araport" id="AT4G04430"/>
<dbReference type="TAIR" id="AT4G04430"/>
<dbReference type="InParanoid" id="Q9XEC1"/>
<dbReference type="PRO" id="PR:Q9XEC1"/>
<dbReference type="Proteomes" id="UP000006548">
    <property type="component" value="Chromosome 4"/>
</dbReference>
<dbReference type="InterPro" id="IPR004252">
    <property type="entry name" value="Probable_transposase_24"/>
</dbReference>
<dbReference type="Pfam" id="PF03004">
    <property type="entry name" value="Transposase_24"/>
    <property type="match status" value="1"/>
</dbReference>
<accession>Q9XEC1</accession>